<protein>
    <recommendedName>
        <fullName>Coiled-coil domain-containing protein 71</fullName>
    </recommendedName>
</protein>
<accession>Q2HJ91</accession>
<dbReference type="EMBL" id="BC113248">
    <property type="protein sequence ID" value="AAI13249.1"/>
    <property type="molecule type" value="mRNA"/>
</dbReference>
<dbReference type="RefSeq" id="NP_001039465.1">
    <property type="nucleotide sequence ID" value="NM_001046000.1"/>
</dbReference>
<dbReference type="SMR" id="Q2HJ91"/>
<dbReference type="FunCoup" id="Q2HJ91">
    <property type="interactions" value="2872"/>
</dbReference>
<dbReference type="STRING" id="9913.ENSBTAP00000018512"/>
<dbReference type="PaxDb" id="9913-ENSBTAP00000018512"/>
<dbReference type="Ensembl" id="ENSBTAT00000018512.5">
    <property type="protein sequence ID" value="ENSBTAP00000018512.3"/>
    <property type="gene ID" value="ENSBTAG00000013932.5"/>
</dbReference>
<dbReference type="GeneID" id="508336"/>
<dbReference type="KEGG" id="bta:508336"/>
<dbReference type="CTD" id="64925"/>
<dbReference type="VEuPathDB" id="HostDB:ENSBTAG00000013932"/>
<dbReference type="VGNC" id="VGNC:26913">
    <property type="gene designation" value="CCDC71"/>
</dbReference>
<dbReference type="eggNOG" id="ENOG502RY9H">
    <property type="taxonomic scope" value="Eukaryota"/>
</dbReference>
<dbReference type="GeneTree" id="ENSGT00940000155306"/>
<dbReference type="HOGENOM" id="CLU_049410_1_0_1"/>
<dbReference type="InParanoid" id="Q2HJ91"/>
<dbReference type="OMA" id="CPETVGQ"/>
<dbReference type="OrthoDB" id="8522252at2759"/>
<dbReference type="TreeFam" id="TF336191"/>
<dbReference type="Proteomes" id="UP000009136">
    <property type="component" value="Chromosome 22"/>
</dbReference>
<dbReference type="Bgee" id="ENSBTAG00000013932">
    <property type="expression patterns" value="Expressed in vas deferens and 105 other cell types or tissues"/>
</dbReference>
<dbReference type="InterPro" id="IPR026695">
    <property type="entry name" value="Ccdc71/71L"/>
</dbReference>
<dbReference type="PANTHER" id="PTHR14484">
    <property type="entry name" value="COILED-COIL DOMAIN-CONTAINING PROTEIN 71"/>
    <property type="match status" value="1"/>
</dbReference>
<dbReference type="PANTHER" id="PTHR14484:SF0">
    <property type="entry name" value="COILED-COIL DOMAIN-CONTAINING PROTEIN 71"/>
    <property type="match status" value="1"/>
</dbReference>
<dbReference type="Pfam" id="PF15374">
    <property type="entry name" value="CCDC71L"/>
    <property type="match status" value="1"/>
</dbReference>
<organism>
    <name type="scientific">Bos taurus</name>
    <name type="common">Bovine</name>
    <dbReference type="NCBI Taxonomy" id="9913"/>
    <lineage>
        <taxon>Eukaryota</taxon>
        <taxon>Metazoa</taxon>
        <taxon>Chordata</taxon>
        <taxon>Craniata</taxon>
        <taxon>Vertebrata</taxon>
        <taxon>Euteleostomi</taxon>
        <taxon>Mammalia</taxon>
        <taxon>Eutheria</taxon>
        <taxon>Laurasiatheria</taxon>
        <taxon>Artiodactyla</taxon>
        <taxon>Ruminantia</taxon>
        <taxon>Pecora</taxon>
        <taxon>Bovidae</taxon>
        <taxon>Bovinae</taxon>
        <taxon>Bos</taxon>
    </lineage>
</organism>
<gene>
    <name type="primary">CCDC71</name>
</gene>
<proteinExistence type="evidence at transcript level"/>
<feature type="chain" id="PRO_0000234420" description="Coiled-coil domain-containing protein 71">
    <location>
        <begin position="1"/>
        <end position="452"/>
    </location>
</feature>
<feature type="region of interest" description="Disordered" evidence="3">
    <location>
        <begin position="81"/>
        <end position="106"/>
    </location>
</feature>
<feature type="region of interest" description="Disordered" evidence="3">
    <location>
        <begin position="209"/>
        <end position="256"/>
    </location>
</feature>
<feature type="region of interest" description="Disordered" evidence="3">
    <location>
        <begin position="322"/>
        <end position="404"/>
    </location>
</feature>
<feature type="coiled-coil region" evidence="2">
    <location>
        <begin position="279"/>
        <end position="344"/>
    </location>
</feature>
<feature type="compositionally biased region" description="Low complexity" evidence="3">
    <location>
        <begin position="87"/>
        <end position="106"/>
    </location>
</feature>
<feature type="compositionally biased region" description="Low complexity" evidence="3">
    <location>
        <begin position="332"/>
        <end position="344"/>
    </location>
</feature>
<feature type="compositionally biased region" description="Basic and acidic residues" evidence="3">
    <location>
        <begin position="377"/>
        <end position="386"/>
    </location>
</feature>
<feature type="modified residue" description="Phosphoserine" evidence="1">
    <location>
        <position position="129"/>
    </location>
</feature>
<evidence type="ECO:0000250" key="1">
    <source>
        <dbReference type="UniProtKB" id="Q8IV32"/>
    </source>
</evidence>
<evidence type="ECO:0000255" key="2"/>
<evidence type="ECO:0000256" key="3">
    <source>
        <dbReference type="SAM" id="MobiDB-lite"/>
    </source>
</evidence>
<sequence>MSVVVQHVEEKAVHSWSRISTAGKKALEEALLVFNPMSQDLSATEAQLVAFLQGLRDDGFQPTILRSGDVYGYSSCTANPPSQTKLQARAPTPAATSPPASAPQTAVRLPAGRATLLPMPLSGRLAKASTPGLAKHATTNLLLSSLKQSSAGRAQGAAVGFPTHLYPGVYPAMRLSVVLEALVPIKTPVACLGAKPKAQSLQLSLGDSPLKVRKGPGKRLGNAQLKAPRKATSKGSKCLAQRGPRSGPRQGAGLQSKTCKVTGSLGGPRVKDGGALGTKAAQAKAACAQAKVAQTQATATQARAKAKAVRARAKAKAARIKAREVRARAKAKAVQAKAKVARTQPRGRGRPKGSIQGRTARRSRKSRPETVGQKRKRTEEAKDLSPRKRTRLGPRSPKVQLGPGTARLLKFRAIKVDRLASDDEVRQQAQRILRVNLSPVIRLQPLPPHSAP</sequence>
<reference key="1">
    <citation type="submission" date="2006-02" db="EMBL/GenBank/DDBJ databases">
        <authorList>
            <consortium name="NIH - Mammalian Gene Collection (MGC) project"/>
        </authorList>
    </citation>
    <scope>NUCLEOTIDE SEQUENCE [LARGE SCALE MRNA]</scope>
    <source>
        <strain>Hereford</strain>
        <tissue>Uterus</tissue>
    </source>
</reference>
<keyword id="KW-0175">Coiled coil</keyword>
<keyword id="KW-0597">Phosphoprotein</keyword>
<keyword id="KW-1185">Reference proteome</keyword>
<name>CCD71_BOVIN</name>